<protein>
    <recommendedName>
        <fullName evidence="1">ATP synthase F(0) complex subunit 8</fullName>
    </recommendedName>
    <alternativeName>
        <fullName>A6L</fullName>
    </alternativeName>
    <alternativeName>
        <fullName>ATP synthase protein 8</fullName>
    </alternativeName>
    <alternativeName>
        <fullName>F-ATPase subunit 8</fullName>
    </alternativeName>
</protein>
<proteinExistence type="inferred from homology"/>
<organism>
    <name type="scientific">Loxigilla noctis</name>
    <name type="common">Lesser Antillean bullfinch</name>
    <name type="synonym">Fringilla noctis</name>
    <dbReference type="NCBI Taxonomy" id="111865"/>
    <lineage>
        <taxon>Eukaryota</taxon>
        <taxon>Metazoa</taxon>
        <taxon>Chordata</taxon>
        <taxon>Craniata</taxon>
        <taxon>Vertebrata</taxon>
        <taxon>Euteleostomi</taxon>
        <taxon>Archelosauria</taxon>
        <taxon>Archosauria</taxon>
        <taxon>Dinosauria</taxon>
        <taxon>Saurischia</taxon>
        <taxon>Theropoda</taxon>
        <taxon>Coelurosauria</taxon>
        <taxon>Aves</taxon>
        <taxon>Neognathae</taxon>
        <taxon>Neoaves</taxon>
        <taxon>Telluraves</taxon>
        <taxon>Australaves</taxon>
        <taxon>Passeriformes</taxon>
        <taxon>Thraupidae</taxon>
        <taxon>Loxigilla</taxon>
    </lineage>
</organism>
<keyword id="KW-0066">ATP synthesis</keyword>
<keyword id="KW-0138">CF(0)</keyword>
<keyword id="KW-0375">Hydrogen ion transport</keyword>
<keyword id="KW-0406">Ion transport</keyword>
<keyword id="KW-0472">Membrane</keyword>
<keyword id="KW-0496">Mitochondrion</keyword>
<keyword id="KW-0812">Transmembrane</keyword>
<keyword id="KW-1133">Transmembrane helix</keyword>
<keyword id="KW-0813">Transport</keyword>
<sequence>MPQLNPHPWFFIMLASWLTFSLIIQPKLLTFVTMNPPSNKPPIAPSTTPWTWPWT</sequence>
<comment type="function">
    <text evidence="1 2">Subunit 8, of the mitochondrial membrane ATP synthase complex (F(1)F(0) ATP synthase or Complex V) that produces ATP from ADP in the presence of a proton gradient across the membrane which is generated by electron transport complexes of the respiratory chain. ATP synthase complex consist of a soluble F(1) head domain - the catalytic core - and a membrane F(1) domain - the membrane proton channel. These two domains are linked by a central stalk rotating inside the F(1) region and a stationary peripheral stalk. During catalysis, ATP synthesis in the catalytic domain of F(1) is coupled via a rotary mechanism of the central stalk subunits to proton translocation (By similarity). In vivo, can only synthesize ATP although its ATP hydrolase activity can be activated artificially in vitro (By similarity). Part of the complex F(0) domain (By similarity).</text>
</comment>
<comment type="subunit">
    <text evidence="1">Component of the ATP synthase complex composed at least of ATP5F1A/subunit alpha, ATP5F1B/subunit beta, ATP5MC1/subunit c (homooctomer), MT-ATP6/subunit a, MT-ATP8/subunit 8, ATP5ME/subunit e, ATP5MF/subunit f, ATP5MG/subunit g, ATP5MK/subunit k, ATP5MJ/subunit j, ATP5F1C/subunit gamma, ATP5F1D/subunit delta, ATP5F1E/subunit epsilon, ATP5PF/subunit F6, ATP5PB/subunit b, ATP5PD/subunit d, ATP5PO/subunit OSCP. ATP synthase complex consists of a soluble F(1) head domain (subunits alpha(3) and beta(3)) - the catalytic core - and a membrane F(0) domain - the membrane proton channel (subunits c, a, 8, e, f, g, k and j). These two domains are linked by a central stalk (subunits gamma, delta, and epsilon) rotating inside the F1 region and a stationary peripheral stalk (subunits F6, b, d, and OSCP).</text>
</comment>
<comment type="subcellular location">
    <subcellularLocation>
        <location>Mitochondrion membrane</location>
        <topology>Single-pass membrane protein</topology>
    </subcellularLocation>
</comment>
<comment type="similarity">
    <text evidence="4">Belongs to the ATPase protein 8 family.</text>
</comment>
<gene>
    <name evidence="1" type="primary">MT-ATP8</name>
    <name type="synonym">ATP8</name>
    <name type="synonym">ATPASE8</name>
    <name type="synonym">MTATP8</name>
</gene>
<feature type="chain" id="PRO_0000195546" description="ATP synthase F(0) complex subunit 8">
    <location>
        <begin position="1"/>
        <end position="55"/>
    </location>
</feature>
<feature type="transmembrane region" description="Helical" evidence="3">
    <location>
        <begin position="10"/>
        <end position="32"/>
    </location>
</feature>
<evidence type="ECO:0000250" key="1">
    <source>
        <dbReference type="UniProtKB" id="P03928"/>
    </source>
</evidence>
<evidence type="ECO:0000250" key="2">
    <source>
        <dbReference type="UniProtKB" id="P19483"/>
    </source>
</evidence>
<evidence type="ECO:0000255" key="3"/>
<evidence type="ECO:0000305" key="4"/>
<name>ATP8_LOXNO</name>
<reference key="1">
    <citation type="journal article" date="1999" name="Biol. Invasions">
        <title>The assembly of an island fauna by natural invasion: sources and temporal patterns in the avian colonization of Barbados.</title>
        <authorList>
            <person name="Lovette I.J."/>
            <person name="Seutin G."/>
            <person name="Ricklefs R.E."/>
            <person name="Bermingham E."/>
        </authorList>
        <dbReference type="AGRICOLA" id="IND23252729"/>
    </citation>
    <scope>NUCLEOTIDE SEQUENCE [GENOMIC DNA]</scope>
    <source>
        <strain>Various strains</strain>
    </source>
</reference>
<geneLocation type="mitochondrion"/>
<accession>Q9MDJ1</accession>
<dbReference type="EMBL" id="AF132376">
    <property type="protein sequence ID" value="AAF37028.1"/>
    <property type="molecule type" value="Genomic_DNA"/>
</dbReference>
<dbReference type="EMBL" id="AF132365">
    <property type="protein sequence ID" value="AAF37006.1"/>
    <property type="molecule type" value="Genomic_DNA"/>
</dbReference>
<dbReference type="EMBL" id="AF132367">
    <property type="protein sequence ID" value="AAF37010.1"/>
    <property type="molecule type" value="Genomic_DNA"/>
</dbReference>
<dbReference type="EMBL" id="AF132368">
    <property type="protein sequence ID" value="AAF37012.1"/>
    <property type="molecule type" value="Genomic_DNA"/>
</dbReference>
<dbReference type="EMBL" id="AF132369">
    <property type="protein sequence ID" value="AAF37014.1"/>
    <property type="molecule type" value="Genomic_DNA"/>
</dbReference>
<dbReference type="EMBL" id="AF132370">
    <property type="protein sequence ID" value="AAF37016.1"/>
    <property type="molecule type" value="Genomic_DNA"/>
</dbReference>
<dbReference type="EMBL" id="AF132371">
    <property type="protein sequence ID" value="AAF37018.1"/>
    <property type="molecule type" value="Genomic_DNA"/>
</dbReference>
<dbReference type="EMBL" id="AF132375">
    <property type="protein sequence ID" value="AAF37026.1"/>
    <property type="molecule type" value="Genomic_DNA"/>
</dbReference>
<dbReference type="SMR" id="Q9MDJ1"/>
<dbReference type="GO" id="GO:0031966">
    <property type="term" value="C:mitochondrial membrane"/>
    <property type="evidence" value="ECO:0007669"/>
    <property type="project" value="UniProtKB-SubCell"/>
</dbReference>
<dbReference type="GO" id="GO:0045259">
    <property type="term" value="C:proton-transporting ATP synthase complex"/>
    <property type="evidence" value="ECO:0007669"/>
    <property type="project" value="UniProtKB-KW"/>
</dbReference>
<dbReference type="GO" id="GO:0015078">
    <property type="term" value="F:proton transmembrane transporter activity"/>
    <property type="evidence" value="ECO:0007669"/>
    <property type="project" value="InterPro"/>
</dbReference>
<dbReference type="GO" id="GO:0015986">
    <property type="term" value="P:proton motive force-driven ATP synthesis"/>
    <property type="evidence" value="ECO:0007669"/>
    <property type="project" value="InterPro"/>
</dbReference>
<dbReference type="InterPro" id="IPR001421">
    <property type="entry name" value="ATP8_metazoa"/>
</dbReference>
<dbReference type="InterPro" id="IPR050635">
    <property type="entry name" value="ATPase_protein_8"/>
</dbReference>
<dbReference type="PANTHER" id="PTHR39937">
    <property type="entry name" value="ATP SYNTHASE PROTEIN 8"/>
    <property type="match status" value="1"/>
</dbReference>
<dbReference type="PANTHER" id="PTHR39937:SF1">
    <property type="entry name" value="ATP SYNTHASE PROTEIN 8"/>
    <property type="match status" value="1"/>
</dbReference>
<dbReference type="Pfam" id="PF00895">
    <property type="entry name" value="ATP-synt_8"/>
    <property type="match status" value="1"/>
</dbReference>